<evidence type="ECO:0000255" key="1">
    <source>
        <dbReference type="HAMAP-Rule" id="MF_00565"/>
    </source>
</evidence>
<dbReference type="EMBL" id="FM177140">
    <property type="protein sequence ID" value="CAQ65980.1"/>
    <property type="molecule type" value="Genomic_DNA"/>
</dbReference>
<dbReference type="SMR" id="B3WC79"/>
<dbReference type="KEGG" id="lcb:LCABL_08570"/>
<dbReference type="HOGENOM" id="CLU_108696_19_0_9"/>
<dbReference type="UniPathway" id="UPA00556"/>
<dbReference type="GO" id="GO:0005737">
    <property type="term" value="C:cytoplasm"/>
    <property type="evidence" value="ECO:0007669"/>
    <property type="project" value="UniProtKB-SubCell"/>
</dbReference>
<dbReference type="GO" id="GO:0036370">
    <property type="term" value="F:D-alanyl carrier activity"/>
    <property type="evidence" value="ECO:0007669"/>
    <property type="project" value="UniProtKB-UniRule"/>
</dbReference>
<dbReference type="GO" id="GO:0071555">
    <property type="term" value="P:cell wall organization"/>
    <property type="evidence" value="ECO:0007669"/>
    <property type="project" value="UniProtKB-KW"/>
</dbReference>
<dbReference type="GO" id="GO:0070395">
    <property type="term" value="P:lipoteichoic acid biosynthetic process"/>
    <property type="evidence" value="ECO:0007669"/>
    <property type="project" value="UniProtKB-UniRule"/>
</dbReference>
<dbReference type="Gene3D" id="1.10.1200.10">
    <property type="entry name" value="ACP-like"/>
    <property type="match status" value="1"/>
</dbReference>
<dbReference type="HAMAP" id="MF_00565">
    <property type="entry name" value="DltC"/>
    <property type="match status" value="1"/>
</dbReference>
<dbReference type="InterPro" id="IPR036736">
    <property type="entry name" value="ACP-like_sf"/>
</dbReference>
<dbReference type="InterPro" id="IPR003230">
    <property type="entry name" value="DltC"/>
</dbReference>
<dbReference type="InterPro" id="IPR009081">
    <property type="entry name" value="PP-bd_ACP"/>
</dbReference>
<dbReference type="NCBIfam" id="TIGR01688">
    <property type="entry name" value="dltC"/>
    <property type="match status" value="1"/>
</dbReference>
<dbReference type="NCBIfam" id="NF003464">
    <property type="entry name" value="PRK05087.1"/>
    <property type="match status" value="1"/>
</dbReference>
<dbReference type="Pfam" id="PF00550">
    <property type="entry name" value="PP-binding"/>
    <property type="match status" value="1"/>
</dbReference>
<dbReference type="SUPFAM" id="SSF47336">
    <property type="entry name" value="ACP-like"/>
    <property type="match status" value="1"/>
</dbReference>
<dbReference type="PROSITE" id="PS50075">
    <property type="entry name" value="CARRIER"/>
    <property type="match status" value="1"/>
</dbReference>
<proteinExistence type="inferred from homology"/>
<comment type="function">
    <text evidence="1">Carrier protein involved in the D-alanylation of lipoteichoic acid (LTA). The loading of thioester-linked D-alanine onto DltC is catalyzed by D-alanine--D-alanyl carrier protein ligase DltA. The DltC-carried D-alanyl group is further transferred to cell membrane phosphatidylglycerol (PG) by forming an ester bond, probably catalyzed by DltD. D-alanylation of LTA plays an important role in modulating the properties of the cell wall in Gram-positive bacteria, influencing the net charge of the cell wall.</text>
</comment>
<comment type="pathway">
    <text evidence="1">Cell wall biogenesis; lipoteichoic acid biosynthesis.</text>
</comment>
<comment type="subcellular location">
    <subcellularLocation>
        <location evidence="1">Cytoplasm</location>
    </subcellularLocation>
</comment>
<comment type="PTM">
    <text evidence="1">4'-phosphopantetheine is transferred from CoA to a specific serine of apo-DCP.</text>
</comment>
<comment type="similarity">
    <text evidence="1">Belongs to the DltC family.</text>
</comment>
<reference key="1">
    <citation type="submission" date="2008-06" db="EMBL/GenBank/DDBJ databases">
        <title>Lactobacillus casei BL23 complete genome sequence.</title>
        <authorList>
            <person name="Maze A."/>
            <person name="Boel G."/>
            <person name="Bourand A."/>
            <person name="Loux V."/>
            <person name="Gibrat J.F."/>
            <person name="Zuniga M."/>
            <person name="Hartke A."/>
            <person name="Deutscher J."/>
        </authorList>
    </citation>
    <scope>NUCLEOTIDE SEQUENCE [LARGE SCALE GENOMIC DNA]</scope>
    <source>
        <strain>BL23</strain>
    </source>
</reference>
<protein>
    <recommendedName>
        <fullName evidence="1">D-alanyl carrier protein</fullName>
        <shortName evidence="1">DCP</shortName>
    </recommendedName>
    <alternativeName>
        <fullName evidence="1">D-alanine--poly(phosphoribitol) ligase subunit 2</fullName>
    </alternativeName>
</protein>
<gene>
    <name evidence="1" type="primary">dltC</name>
    <name type="ordered locus">LCABL_08570</name>
</gene>
<feature type="chain" id="PRO_1000129399" description="D-alanyl carrier protein">
    <location>
        <begin position="1"/>
        <end position="81"/>
    </location>
</feature>
<feature type="domain" description="Carrier" evidence="1">
    <location>
        <begin position="1"/>
        <end position="81"/>
    </location>
</feature>
<feature type="modified residue" description="O-(pantetheine 4'-phosphoryl)serine" evidence="1">
    <location>
        <position position="39"/>
    </location>
</feature>
<sequence>MADEAIKNGVLDILADLTGSDDVKTNLDLNLFETGLLDSMGTVQLLLELQSQFGVEAPVSEFDRSQWDTPNKIIAKVEQAQ</sequence>
<name>DLTC_LACCB</name>
<accession>B3WC79</accession>
<organism>
    <name type="scientific">Lacticaseibacillus casei (strain BL23)</name>
    <name type="common">Lactobacillus casei</name>
    <dbReference type="NCBI Taxonomy" id="543734"/>
    <lineage>
        <taxon>Bacteria</taxon>
        <taxon>Bacillati</taxon>
        <taxon>Bacillota</taxon>
        <taxon>Bacilli</taxon>
        <taxon>Lactobacillales</taxon>
        <taxon>Lactobacillaceae</taxon>
        <taxon>Lacticaseibacillus</taxon>
    </lineage>
</organism>
<keyword id="KW-0961">Cell wall biogenesis/degradation</keyword>
<keyword id="KW-0963">Cytoplasm</keyword>
<keyword id="KW-0596">Phosphopantetheine</keyword>
<keyword id="KW-0597">Phosphoprotein</keyword>